<name>NA124_ANEVI</name>
<sequence>MMNRLLVFLMLGAAFMLVVSAIDQDANEDINKRGIPCLCDSDGPSVRGNTLSGIIWLAGCPSGWHNCKKHGPTIGWCCKQ</sequence>
<keyword id="KW-0165">Cleavage on pair of basic residues</keyword>
<keyword id="KW-1015">Disulfide bond</keyword>
<keyword id="KW-0872">Ion channel impairing toxin</keyword>
<keyword id="KW-0166">Nematocyst</keyword>
<keyword id="KW-0528">Neurotoxin</keyword>
<keyword id="KW-0964">Secreted</keyword>
<keyword id="KW-0732">Signal</keyword>
<keyword id="KW-0800">Toxin</keyword>
<keyword id="KW-0738">Voltage-gated sodium channel impairing toxin</keyword>
<proteinExistence type="evidence at protein level"/>
<evidence type="ECO:0000250" key="1">
    <source>
        <dbReference type="UniProtKB" id="P01528"/>
    </source>
</evidence>
<evidence type="ECO:0000255" key="2"/>
<evidence type="ECO:0000269" key="3">
    <source>
    </source>
</evidence>
<evidence type="ECO:0000269" key="4">
    <source>
    </source>
</evidence>
<evidence type="ECO:0000269" key="5">
    <source>
    </source>
</evidence>
<evidence type="ECO:0000303" key="6">
    <source>
    </source>
</evidence>
<evidence type="ECO:0000303" key="7">
    <source>
    </source>
</evidence>
<evidence type="ECO:0000305" key="8"/>
<evidence type="ECO:0000305" key="9">
    <source>
    </source>
</evidence>
<evidence type="ECO:0000312" key="10">
    <source>
        <dbReference type="EMBL" id="ABW97329.1"/>
    </source>
</evidence>
<evidence type="ECO:0000312" key="11">
    <source>
        <dbReference type="EMBL" id="ABW97356.1"/>
    </source>
</evidence>
<evidence type="ECO:0000312" key="12">
    <source>
        <dbReference type="EMBL" id="ACL12309.1"/>
    </source>
</evidence>
<comment type="function">
    <text evidence="1 4 5">Binds specifically to voltage-gated sodium channels (Nav) (site 3), thereby delaying their inactivation during signal transduction (PubMed:19609479). Has a strong effect on crustaceans and insects and a weaker effect on mammals (By similarity). It strongly inhibits D.melanogaster sodium channel (DmNav1) (PubMed:19609479). It strongly affects the heart sodium channels (Nav1.5/SCN5A) and weakly inhibits the brain sodium channel Nav1.2/SCN2A (By similarity). In vivo, when released into the medium, this recombinant toxin induces impaired swimming, paralysis and death of the crustacean A.nauplii within several hours (PubMed:22048953). Its effect on zebrafish (D.rerio) larvae is much faster, since it induces paralysis or strong convulsion and impaired swimming, within 10 minutes (PubMed:22048953).</text>
</comment>
<comment type="subcellular location">
    <subcellularLocation>
        <location evidence="9">Secreted</location>
    </subcellularLocation>
    <subcellularLocation>
        <location evidence="9">Nematocyst</location>
    </subcellularLocation>
    <text evidence="9">In nematocyst, is associated with the tubule prior to discharge.</text>
</comment>
<comment type="tissue specificity">
    <text evidence="9">Expressed in gland cells and nematocytes.</text>
</comment>
<comment type="miscellaneous">
    <text evidence="3">This protein is encoded by at least 3 different genes. At least 3 other genes code for a similar Av2 with a Val (instead an Ile) at position 35.</text>
</comment>
<comment type="similarity">
    <text evidence="8">Belongs to the sea anemone sodium channel inhibitory toxin family. Type I subfamily.</text>
</comment>
<comment type="caution">
    <text evidence="8">Opinions are divided on whether Anemonia viridis (Forsskal, 1775) and Anemonia sulcata (Pennant, 1777) are separate species.</text>
</comment>
<accession>P0DL52</accession>
<accession>B1NWR3</accession>
<organism>
    <name type="scientific">Anemonia viridis</name>
    <name type="common">Snakelocks anemone</name>
    <dbReference type="NCBI Taxonomy" id="51769"/>
    <lineage>
        <taxon>Eukaryota</taxon>
        <taxon>Metazoa</taxon>
        <taxon>Cnidaria</taxon>
        <taxon>Anthozoa</taxon>
        <taxon>Hexacorallia</taxon>
        <taxon>Actiniaria</taxon>
        <taxon>Actiniidae</taxon>
        <taxon>Anemonia</taxon>
    </lineage>
</organism>
<feature type="signal peptide" evidence="2">
    <location>
        <begin position="1"/>
        <end position="21"/>
    </location>
</feature>
<feature type="propeptide" id="PRO_0000433682" evidence="1">
    <location>
        <begin position="22"/>
        <end position="31"/>
    </location>
</feature>
<feature type="chain" id="PRO_5000319684" description="Delta-actitoxin-Avd1e 1">
    <location>
        <begin position="34"/>
        <end position="80"/>
    </location>
</feature>
<feature type="disulfide bond" evidence="1">
    <location>
        <begin position="37"/>
        <end position="77"/>
    </location>
</feature>
<feature type="disulfide bond" evidence="1">
    <location>
        <begin position="39"/>
        <end position="67"/>
    </location>
</feature>
<feature type="disulfide bond" evidence="1">
    <location>
        <begin position="60"/>
        <end position="78"/>
    </location>
</feature>
<feature type="mutagenesis site" description="In vivo, slightly affects fish larvae after several hours." evidence="5">
    <original>L</original>
    <variation>A</variation>
    <location>
        <position position="38"/>
    </location>
</feature>
<protein>
    <recommendedName>
        <fullName evidence="7">Delta-actitoxin-Avd1e 1</fullName>
        <shortName evidence="7">Delta-AITX-Avd1e 1</shortName>
    </recommendedName>
    <alternativeName>
        <fullName evidence="6">Av2</fullName>
    </alternativeName>
    <alternativeName>
        <fullName evidence="12">Neurotoxin 2</fullName>
    </alternativeName>
    <alternativeName>
        <fullName evidence="7 10">Toxin 2-4</fullName>
    </alternativeName>
    <alternativeName>
        <fullName evidence="11">Toxin 2c5</fullName>
    </alternativeName>
</protein>
<reference key="1">
    <citation type="journal article" date="2008" name="Mol. Biol. Evol.">
        <title>Concerted evolution of sea anemone neurotoxin genes is revealed through analysis of the Nematostella vectensis genome.</title>
        <authorList>
            <person name="Moran Y."/>
            <person name="Weinberger H."/>
            <person name="Sullivan J.C."/>
            <person name="Reitzel A.M."/>
            <person name="Finnerty J.R."/>
            <person name="Gurevitz M."/>
        </authorList>
    </citation>
    <scope>NUCLEOTIDE SEQUENCE [GENOMIC DNA / MRNA]</scope>
</reference>
<reference key="2">
    <citation type="journal article" date="2009" name="J. Mol. Evol.">
        <title>Fusion and retrotransposition events in the evolution of the sea anemone Anemonia viridis neurotoxin genes.</title>
        <authorList>
            <person name="Moran Y."/>
            <person name="Weinberger H."/>
            <person name="Lazarus N."/>
            <person name="Gur M."/>
            <person name="Kahn R."/>
            <person name="Gordon D."/>
            <person name="Gurevitz M."/>
        </authorList>
    </citation>
    <scope>NUCLEOTIDE SEQUENCE [GENOMIC DNA]</scope>
    <scope>FUNCTION</scope>
    <scope>RECOMBINANT EXPRESSION</scope>
</reference>
<reference key="3">
    <citation type="journal article" date="2012" name="Proc. R. Soc. B">
        <title>Neurotoxin localization to ectodermal gland cells uncovers an alternative mechanism of venom delivery in sea anemones.</title>
        <authorList>
            <person name="Moran Y."/>
            <person name="Genikhovich G."/>
            <person name="Gordon D."/>
            <person name="Wienkoop S."/>
            <person name="Zenkert C."/>
            <person name="Ozbek S."/>
            <person name="Technau U."/>
            <person name="Gurevitz M."/>
        </authorList>
    </citation>
    <scope>FUNCTION</scope>
    <scope>SUBCELLULAR LOCATION</scope>
    <scope>TISSUE SPECIFICITY</scope>
    <scope>MUTAGENESIS OF LEU-38</scope>
</reference>
<reference key="4">
    <citation type="journal article" date="2012" name="Toxicon">
        <title>Development of a rational nomenclature for naming peptide and protein toxins from sea anemones.</title>
        <authorList>
            <person name="Oliveira J.S."/>
            <person name="Fuentes-Silva D."/>
            <person name="King G.F."/>
        </authorList>
    </citation>
    <scope>NOMENCLATURE</scope>
</reference>
<dbReference type="EMBL" id="EU124450">
    <property type="protein sequence ID" value="ABW97329.1"/>
    <property type="molecule type" value="Genomic_DNA"/>
</dbReference>
<dbReference type="EMBL" id="EU124477">
    <property type="protein sequence ID" value="ABW97356.1"/>
    <property type="molecule type" value="mRNA"/>
</dbReference>
<dbReference type="EMBL" id="EU919736">
    <property type="protein sequence ID" value="ACL12309.1"/>
    <property type="molecule type" value="Genomic_DNA"/>
</dbReference>
<dbReference type="SMR" id="P0DL52"/>
<dbReference type="GO" id="GO:0005576">
    <property type="term" value="C:extracellular region"/>
    <property type="evidence" value="ECO:0007669"/>
    <property type="project" value="UniProtKB-SubCell"/>
</dbReference>
<dbReference type="GO" id="GO:0042151">
    <property type="term" value="C:nematocyst"/>
    <property type="evidence" value="ECO:0007669"/>
    <property type="project" value="UniProtKB-SubCell"/>
</dbReference>
<dbReference type="GO" id="GO:0017080">
    <property type="term" value="F:sodium channel regulator activity"/>
    <property type="evidence" value="ECO:0007669"/>
    <property type="project" value="UniProtKB-KW"/>
</dbReference>
<dbReference type="GO" id="GO:0090729">
    <property type="term" value="F:toxin activity"/>
    <property type="evidence" value="ECO:0007669"/>
    <property type="project" value="UniProtKB-KW"/>
</dbReference>
<dbReference type="Gene3D" id="2.20.20.10">
    <property type="entry name" value="Anthopleurin-A"/>
    <property type="match status" value="1"/>
</dbReference>
<dbReference type="InterPro" id="IPR023355">
    <property type="entry name" value="Myo_ane_neurotoxin_sf"/>
</dbReference>
<dbReference type="Pfam" id="PF00706">
    <property type="entry name" value="Toxin_4"/>
    <property type="match status" value="1"/>
</dbReference>
<dbReference type="SUPFAM" id="SSF57392">
    <property type="entry name" value="Defensin-like"/>
    <property type="match status" value="1"/>
</dbReference>